<sequence length="201" mass="22705">MEITTIDTKSKLKLNKEIFAYTYNEGLVHQAVVTFMNNARSGNSAQKTRSEVSGGGKKPWNQKGTGRARAGTIRSPLWRSGGVTFASKKRDYSQKLNKKMYKRALRSIISELCRTGNLVVVSDFQCDNHKTKDFLKKMNQMEISNALIIMSEVGENEYLGSRNLIDYDICDVTTIDPVSLLRFEKVVVTEAAIKKIEEQLQ</sequence>
<accession>A5IHR3</accession>
<proteinExistence type="inferred from homology"/>
<name>RL4_LEGPC</name>
<organism>
    <name type="scientific">Legionella pneumophila (strain Corby)</name>
    <dbReference type="NCBI Taxonomy" id="400673"/>
    <lineage>
        <taxon>Bacteria</taxon>
        <taxon>Pseudomonadati</taxon>
        <taxon>Pseudomonadota</taxon>
        <taxon>Gammaproteobacteria</taxon>
        <taxon>Legionellales</taxon>
        <taxon>Legionellaceae</taxon>
        <taxon>Legionella</taxon>
    </lineage>
</organism>
<keyword id="KW-0687">Ribonucleoprotein</keyword>
<keyword id="KW-0689">Ribosomal protein</keyword>
<keyword id="KW-0694">RNA-binding</keyword>
<keyword id="KW-0699">rRNA-binding</keyword>
<comment type="function">
    <text evidence="1">One of the primary rRNA binding proteins, this protein initially binds near the 5'-end of the 23S rRNA. It is important during the early stages of 50S assembly. It makes multiple contacts with different domains of the 23S rRNA in the assembled 50S subunit and ribosome.</text>
</comment>
<comment type="function">
    <text evidence="1">Forms part of the polypeptide exit tunnel.</text>
</comment>
<comment type="subunit">
    <text evidence="1">Part of the 50S ribosomal subunit.</text>
</comment>
<comment type="similarity">
    <text evidence="1">Belongs to the universal ribosomal protein uL4 family.</text>
</comment>
<evidence type="ECO:0000255" key="1">
    <source>
        <dbReference type="HAMAP-Rule" id="MF_01328"/>
    </source>
</evidence>
<evidence type="ECO:0000256" key="2">
    <source>
        <dbReference type="SAM" id="MobiDB-lite"/>
    </source>
</evidence>
<evidence type="ECO:0000305" key="3"/>
<reference key="1">
    <citation type="submission" date="2006-11" db="EMBL/GenBank/DDBJ databases">
        <title>Identification and characterization of a new conjugation/ type IVA secretion system (trb/tra) of L. pneumophila Corby localized on a mobile genomic island.</title>
        <authorList>
            <person name="Gloeckner G."/>
            <person name="Albert-Weissenberger C."/>
            <person name="Weinmann E."/>
            <person name="Jacobi S."/>
            <person name="Schunder E."/>
            <person name="Steinert M."/>
            <person name="Buchrieser C."/>
            <person name="Hacker J."/>
            <person name="Heuner K."/>
        </authorList>
    </citation>
    <scope>NUCLEOTIDE SEQUENCE [LARGE SCALE GENOMIC DNA]</scope>
    <source>
        <strain>Corby</strain>
    </source>
</reference>
<protein>
    <recommendedName>
        <fullName evidence="1">Large ribosomal subunit protein uL4</fullName>
    </recommendedName>
    <alternativeName>
        <fullName evidence="3">50S ribosomal protein L4</fullName>
    </alternativeName>
</protein>
<feature type="chain" id="PRO_1000052429" description="Large ribosomal subunit protein uL4">
    <location>
        <begin position="1"/>
        <end position="201"/>
    </location>
</feature>
<feature type="region of interest" description="Disordered" evidence="2">
    <location>
        <begin position="42"/>
        <end position="67"/>
    </location>
</feature>
<dbReference type="EMBL" id="CP000675">
    <property type="protein sequence ID" value="ABQ56913.1"/>
    <property type="molecule type" value="Genomic_DNA"/>
</dbReference>
<dbReference type="RefSeq" id="WP_011945546.1">
    <property type="nucleotide sequence ID" value="NZ_JAPMSS010000006.1"/>
</dbReference>
<dbReference type="SMR" id="A5IHR3"/>
<dbReference type="GeneID" id="57034333"/>
<dbReference type="KEGG" id="lpc:LPC_3012"/>
<dbReference type="HOGENOM" id="CLU_041575_5_2_6"/>
<dbReference type="GO" id="GO:1990904">
    <property type="term" value="C:ribonucleoprotein complex"/>
    <property type="evidence" value="ECO:0007669"/>
    <property type="project" value="UniProtKB-KW"/>
</dbReference>
<dbReference type="GO" id="GO:0005840">
    <property type="term" value="C:ribosome"/>
    <property type="evidence" value="ECO:0007669"/>
    <property type="project" value="UniProtKB-KW"/>
</dbReference>
<dbReference type="GO" id="GO:0019843">
    <property type="term" value="F:rRNA binding"/>
    <property type="evidence" value="ECO:0007669"/>
    <property type="project" value="UniProtKB-UniRule"/>
</dbReference>
<dbReference type="GO" id="GO:0003735">
    <property type="term" value="F:structural constituent of ribosome"/>
    <property type="evidence" value="ECO:0007669"/>
    <property type="project" value="InterPro"/>
</dbReference>
<dbReference type="GO" id="GO:0006412">
    <property type="term" value="P:translation"/>
    <property type="evidence" value="ECO:0007669"/>
    <property type="project" value="UniProtKB-UniRule"/>
</dbReference>
<dbReference type="Gene3D" id="3.40.1370.10">
    <property type="match status" value="1"/>
</dbReference>
<dbReference type="HAMAP" id="MF_01328_B">
    <property type="entry name" value="Ribosomal_uL4_B"/>
    <property type="match status" value="1"/>
</dbReference>
<dbReference type="InterPro" id="IPR002136">
    <property type="entry name" value="Ribosomal_uL4"/>
</dbReference>
<dbReference type="InterPro" id="IPR013005">
    <property type="entry name" value="Ribosomal_uL4-like"/>
</dbReference>
<dbReference type="InterPro" id="IPR023574">
    <property type="entry name" value="Ribosomal_uL4_dom_sf"/>
</dbReference>
<dbReference type="NCBIfam" id="TIGR03953">
    <property type="entry name" value="rplD_bact"/>
    <property type="match status" value="1"/>
</dbReference>
<dbReference type="PANTHER" id="PTHR10746">
    <property type="entry name" value="50S RIBOSOMAL PROTEIN L4"/>
    <property type="match status" value="1"/>
</dbReference>
<dbReference type="PANTHER" id="PTHR10746:SF6">
    <property type="entry name" value="LARGE RIBOSOMAL SUBUNIT PROTEIN UL4M"/>
    <property type="match status" value="1"/>
</dbReference>
<dbReference type="Pfam" id="PF00573">
    <property type="entry name" value="Ribosomal_L4"/>
    <property type="match status" value="1"/>
</dbReference>
<dbReference type="SUPFAM" id="SSF52166">
    <property type="entry name" value="Ribosomal protein L4"/>
    <property type="match status" value="1"/>
</dbReference>
<gene>
    <name evidence="1" type="primary">rplD</name>
    <name type="ordered locus">LPC_3012</name>
</gene>